<accession>A4IPP2</accession>
<proteinExistence type="inferred from homology"/>
<evidence type="ECO:0000255" key="1">
    <source>
        <dbReference type="HAMAP-Rule" id="MF_00214"/>
    </source>
</evidence>
<keyword id="KW-0028">Amino-acid biosynthesis</keyword>
<keyword id="KW-0057">Aromatic amino acid biosynthesis</keyword>
<keyword id="KW-0456">Lyase</keyword>
<keyword id="KW-0704">Schiff base</keyword>
<reference key="1">
    <citation type="journal article" date="2007" name="Proc. Natl. Acad. Sci. U.S.A.">
        <title>Genome and proteome of long-chain alkane degrading Geobacillus thermodenitrificans NG80-2 isolated from a deep-subsurface oil reservoir.</title>
        <authorList>
            <person name="Feng L."/>
            <person name="Wang W."/>
            <person name="Cheng J."/>
            <person name="Ren Y."/>
            <person name="Zhao G."/>
            <person name="Gao C."/>
            <person name="Tang Y."/>
            <person name="Liu X."/>
            <person name="Han W."/>
            <person name="Peng X."/>
            <person name="Liu R."/>
            <person name="Wang L."/>
        </authorList>
    </citation>
    <scope>NUCLEOTIDE SEQUENCE [LARGE SCALE GENOMIC DNA]</scope>
    <source>
        <strain>NG80-2</strain>
    </source>
</reference>
<gene>
    <name evidence="1" type="primary">aroD</name>
    <name type="ordered locus">GTNG_1941</name>
</gene>
<feature type="chain" id="PRO_0000325525" description="3-dehydroquinate dehydratase">
    <location>
        <begin position="1"/>
        <end position="257"/>
    </location>
</feature>
<feature type="active site" description="Proton donor/acceptor" evidence="1">
    <location>
        <position position="147"/>
    </location>
</feature>
<feature type="active site" description="Schiff-base intermediate with substrate" evidence="1">
    <location>
        <position position="174"/>
    </location>
</feature>
<feature type="binding site" evidence="1">
    <location>
        <begin position="50"/>
        <end position="52"/>
    </location>
    <ligand>
        <name>3-dehydroquinate</name>
        <dbReference type="ChEBI" id="CHEBI:32364"/>
    </ligand>
</feature>
<feature type="binding site" evidence="1">
    <location>
        <position position="86"/>
    </location>
    <ligand>
        <name>3-dehydroquinate</name>
        <dbReference type="ChEBI" id="CHEBI:32364"/>
    </ligand>
</feature>
<feature type="binding site" evidence="1">
    <location>
        <position position="216"/>
    </location>
    <ligand>
        <name>3-dehydroquinate</name>
        <dbReference type="ChEBI" id="CHEBI:32364"/>
    </ligand>
</feature>
<feature type="binding site" evidence="1">
    <location>
        <position position="235"/>
    </location>
    <ligand>
        <name>3-dehydroquinate</name>
        <dbReference type="ChEBI" id="CHEBI:32364"/>
    </ligand>
</feature>
<feature type="binding site" evidence="1">
    <location>
        <position position="239"/>
    </location>
    <ligand>
        <name>3-dehydroquinate</name>
        <dbReference type="ChEBI" id="CHEBI:32364"/>
    </ligand>
</feature>
<organism>
    <name type="scientific">Geobacillus thermodenitrificans (strain NG80-2)</name>
    <dbReference type="NCBI Taxonomy" id="420246"/>
    <lineage>
        <taxon>Bacteria</taxon>
        <taxon>Bacillati</taxon>
        <taxon>Bacillota</taxon>
        <taxon>Bacilli</taxon>
        <taxon>Bacillales</taxon>
        <taxon>Anoxybacillaceae</taxon>
        <taxon>Geobacillus</taxon>
    </lineage>
</organism>
<name>AROD_GEOTN</name>
<protein>
    <recommendedName>
        <fullName evidence="1">3-dehydroquinate dehydratase</fullName>
        <shortName evidence="1">3-dehydroquinase</shortName>
        <ecNumber evidence="1">4.2.1.10</ecNumber>
    </recommendedName>
    <alternativeName>
        <fullName evidence="1">Type I DHQase</fullName>
    </alternativeName>
    <alternativeName>
        <fullName evidence="1">Type I dehydroquinase</fullName>
        <shortName evidence="1">DHQ1</shortName>
    </alternativeName>
</protein>
<sequence length="257" mass="28151">MAISKGAINVRSIFIGGEEPCICAPVVGVDAEQVLAETRQISAKKPHLIEWRADFFNGIHDDRQVVATAKEIRTIAGDIPILFTVRSEREGGRPIPLTEEEKMRLFETVCQSGAIDLLDYELVHEPYVATVRQLSRQYGVRLILSYHNFDFTPAKEELVAKMRQAGKYGADIAKVAVMPKSLQDVLVLLQATEEARQELPIPLITMSMGGLGAITRLAGGLFGSAVTFAVGQQSSAPGQIPIEEVKDVLSVIMKYSQ</sequence>
<comment type="function">
    <text evidence="1">Involved in the third step of the chorismate pathway, which leads to the biosynthesis of aromatic amino acids. Catalyzes the cis-dehydration of 3-dehydroquinate (DHQ) and introduces the first double bond of the aromatic ring to yield 3-dehydroshikimate.</text>
</comment>
<comment type="catalytic activity">
    <reaction evidence="1">
        <text>3-dehydroquinate = 3-dehydroshikimate + H2O</text>
        <dbReference type="Rhea" id="RHEA:21096"/>
        <dbReference type="ChEBI" id="CHEBI:15377"/>
        <dbReference type="ChEBI" id="CHEBI:16630"/>
        <dbReference type="ChEBI" id="CHEBI:32364"/>
        <dbReference type="EC" id="4.2.1.10"/>
    </reaction>
</comment>
<comment type="pathway">
    <text evidence="1">Metabolic intermediate biosynthesis; chorismate biosynthesis; chorismate from D-erythrose 4-phosphate and phosphoenolpyruvate: step 3/7.</text>
</comment>
<comment type="subunit">
    <text evidence="1">Homodimer.</text>
</comment>
<comment type="similarity">
    <text evidence="1">Belongs to the type-I 3-dehydroquinase family.</text>
</comment>
<dbReference type="EC" id="4.2.1.10" evidence="1"/>
<dbReference type="EMBL" id="CP000557">
    <property type="protein sequence ID" value="ABO67296.1"/>
    <property type="molecule type" value="Genomic_DNA"/>
</dbReference>
<dbReference type="RefSeq" id="WP_008880587.1">
    <property type="nucleotide sequence ID" value="NC_009328.1"/>
</dbReference>
<dbReference type="SMR" id="A4IPP2"/>
<dbReference type="KEGG" id="gtn:GTNG_1941"/>
<dbReference type="eggNOG" id="COG0710">
    <property type="taxonomic scope" value="Bacteria"/>
</dbReference>
<dbReference type="HOGENOM" id="CLU_064444_0_0_9"/>
<dbReference type="UniPathway" id="UPA00053">
    <property type="reaction ID" value="UER00086"/>
</dbReference>
<dbReference type="Proteomes" id="UP000001578">
    <property type="component" value="Chromosome"/>
</dbReference>
<dbReference type="GO" id="GO:0003855">
    <property type="term" value="F:3-dehydroquinate dehydratase activity"/>
    <property type="evidence" value="ECO:0007669"/>
    <property type="project" value="UniProtKB-UniRule"/>
</dbReference>
<dbReference type="GO" id="GO:0046279">
    <property type="term" value="P:3,4-dihydroxybenzoate biosynthetic process"/>
    <property type="evidence" value="ECO:0007669"/>
    <property type="project" value="UniProtKB-ARBA"/>
</dbReference>
<dbReference type="GO" id="GO:0008652">
    <property type="term" value="P:amino acid biosynthetic process"/>
    <property type="evidence" value="ECO:0007669"/>
    <property type="project" value="UniProtKB-KW"/>
</dbReference>
<dbReference type="GO" id="GO:0009073">
    <property type="term" value="P:aromatic amino acid family biosynthetic process"/>
    <property type="evidence" value="ECO:0007669"/>
    <property type="project" value="UniProtKB-KW"/>
</dbReference>
<dbReference type="GO" id="GO:0009423">
    <property type="term" value="P:chorismate biosynthetic process"/>
    <property type="evidence" value="ECO:0007669"/>
    <property type="project" value="UniProtKB-UniRule"/>
</dbReference>
<dbReference type="CDD" id="cd00502">
    <property type="entry name" value="DHQase_I"/>
    <property type="match status" value="1"/>
</dbReference>
<dbReference type="FunFam" id="3.20.20.70:FF:000047">
    <property type="entry name" value="3-dehydroquinate dehydratase"/>
    <property type="match status" value="1"/>
</dbReference>
<dbReference type="Gene3D" id="3.20.20.70">
    <property type="entry name" value="Aldolase class I"/>
    <property type="match status" value="1"/>
</dbReference>
<dbReference type="HAMAP" id="MF_00214">
    <property type="entry name" value="AroD"/>
    <property type="match status" value="1"/>
</dbReference>
<dbReference type="InterPro" id="IPR013785">
    <property type="entry name" value="Aldolase_TIM"/>
</dbReference>
<dbReference type="InterPro" id="IPR001381">
    <property type="entry name" value="DHquinase_I"/>
</dbReference>
<dbReference type="InterPro" id="IPR050146">
    <property type="entry name" value="Type-I_3-dehydroquinase"/>
</dbReference>
<dbReference type="NCBIfam" id="TIGR01093">
    <property type="entry name" value="aroD"/>
    <property type="match status" value="1"/>
</dbReference>
<dbReference type="PANTHER" id="PTHR43699">
    <property type="entry name" value="3-DEHYDROQUINATE DEHYDRATASE"/>
    <property type="match status" value="1"/>
</dbReference>
<dbReference type="PANTHER" id="PTHR43699:SF1">
    <property type="entry name" value="3-DEHYDROQUINATE DEHYDRATASE"/>
    <property type="match status" value="1"/>
</dbReference>
<dbReference type="Pfam" id="PF01487">
    <property type="entry name" value="DHquinase_I"/>
    <property type="match status" value="1"/>
</dbReference>
<dbReference type="SUPFAM" id="SSF51569">
    <property type="entry name" value="Aldolase"/>
    <property type="match status" value="1"/>
</dbReference>